<comment type="function">
    <text evidence="1">Methyltransferase required for the conversion of demethylmenaquinol (DMKH2) to menaquinol (MKH2).</text>
</comment>
<comment type="catalytic activity">
    <reaction evidence="1">
        <text>a 2-demethylmenaquinol + S-adenosyl-L-methionine = a menaquinol + S-adenosyl-L-homocysteine + H(+)</text>
        <dbReference type="Rhea" id="RHEA:42640"/>
        <dbReference type="Rhea" id="RHEA-COMP:9539"/>
        <dbReference type="Rhea" id="RHEA-COMP:9563"/>
        <dbReference type="ChEBI" id="CHEBI:15378"/>
        <dbReference type="ChEBI" id="CHEBI:18151"/>
        <dbReference type="ChEBI" id="CHEBI:55437"/>
        <dbReference type="ChEBI" id="CHEBI:57856"/>
        <dbReference type="ChEBI" id="CHEBI:59789"/>
        <dbReference type="EC" id="2.1.1.163"/>
    </reaction>
</comment>
<comment type="pathway">
    <text evidence="1">Quinol/quinone metabolism; menaquinone biosynthesis; menaquinol from 1,4-dihydroxy-2-naphthoate: step 2/2.</text>
</comment>
<comment type="similarity">
    <text evidence="1">Belongs to the class I-like SAM-binding methyltransferase superfamily. MenG/UbiE family.</text>
</comment>
<sequence length="241" mass="27250">MAKNKAEKEKVHKVFQNISTNYDKLNNIISFEQHKVWRKRVMKSMQVKKGSKALDVCCGTADWTIALSKAVGPSGEVIGLDFSENMLKVGEEKTKNMSNIQLVQGDAMDLPFDDNEFDYVTIGFGLRNIPDYVIALKEMNRVLKPGGMAVCLETSQPTIPVFKQGYQLYFKFVMPIFGKLFAKSKEEYEWLQQSAFNFPDRDELKALFQLAGFKNVEVKSFTGGVAAMHLGYKEKETAKGD</sequence>
<accession>B9DNV5</accession>
<keyword id="KW-0474">Menaquinone biosynthesis</keyword>
<keyword id="KW-0489">Methyltransferase</keyword>
<keyword id="KW-1185">Reference proteome</keyword>
<keyword id="KW-0949">S-adenosyl-L-methionine</keyword>
<keyword id="KW-0808">Transferase</keyword>
<dbReference type="EC" id="2.1.1.163" evidence="1"/>
<dbReference type="EMBL" id="AM295250">
    <property type="protein sequence ID" value="CAL28011.1"/>
    <property type="molecule type" value="Genomic_DNA"/>
</dbReference>
<dbReference type="RefSeq" id="WP_015900352.1">
    <property type="nucleotide sequence ID" value="NC_012121.1"/>
</dbReference>
<dbReference type="SMR" id="B9DNV5"/>
<dbReference type="GeneID" id="93793529"/>
<dbReference type="KEGG" id="sca:SCA_1103"/>
<dbReference type="eggNOG" id="COG2226">
    <property type="taxonomic scope" value="Bacteria"/>
</dbReference>
<dbReference type="HOGENOM" id="CLU_037990_0_0_9"/>
<dbReference type="OrthoDB" id="9808140at2"/>
<dbReference type="BioCyc" id="SCAR396513:SCA_RS05525-MONOMER"/>
<dbReference type="UniPathway" id="UPA00079">
    <property type="reaction ID" value="UER00169"/>
</dbReference>
<dbReference type="Proteomes" id="UP000000444">
    <property type="component" value="Chromosome"/>
</dbReference>
<dbReference type="GO" id="GO:0043770">
    <property type="term" value="F:demethylmenaquinone methyltransferase activity"/>
    <property type="evidence" value="ECO:0007669"/>
    <property type="project" value="UniProtKB-UniRule"/>
</dbReference>
<dbReference type="GO" id="GO:0009234">
    <property type="term" value="P:menaquinone biosynthetic process"/>
    <property type="evidence" value="ECO:0007669"/>
    <property type="project" value="UniProtKB-UniRule"/>
</dbReference>
<dbReference type="GO" id="GO:0032259">
    <property type="term" value="P:methylation"/>
    <property type="evidence" value="ECO:0007669"/>
    <property type="project" value="UniProtKB-KW"/>
</dbReference>
<dbReference type="CDD" id="cd02440">
    <property type="entry name" value="AdoMet_MTases"/>
    <property type="match status" value="1"/>
</dbReference>
<dbReference type="FunFam" id="3.40.50.150:FF:000086">
    <property type="entry name" value="Demethylmenaquinone methyltransferase"/>
    <property type="match status" value="1"/>
</dbReference>
<dbReference type="Gene3D" id="3.40.50.150">
    <property type="entry name" value="Vaccinia Virus protein VP39"/>
    <property type="match status" value="1"/>
</dbReference>
<dbReference type="HAMAP" id="MF_01813">
    <property type="entry name" value="MenG_UbiE_methyltr"/>
    <property type="match status" value="1"/>
</dbReference>
<dbReference type="InterPro" id="IPR029063">
    <property type="entry name" value="SAM-dependent_MTases_sf"/>
</dbReference>
<dbReference type="InterPro" id="IPR004033">
    <property type="entry name" value="UbiE/COQ5_MeTrFase"/>
</dbReference>
<dbReference type="InterPro" id="IPR023576">
    <property type="entry name" value="UbiE/COQ5_MeTrFase_CS"/>
</dbReference>
<dbReference type="NCBIfam" id="TIGR01934">
    <property type="entry name" value="MenG_MenH_UbiE"/>
    <property type="match status" value="1"/>
</dbReference>
<dbReference type="NCBIfam" id="NF001243">
    <property type="entry name" value="PRK00216.1-4"/>
    <property type="match status" value="1"/>
</dbReference>
<dbReference type="NCBIfam" id="NF001244">
    <property type="entry name" value="PRK00216.1-5"/>
    <property type="match status" value="1"/>
</dbReference>
<dbReference type="PANTHER" id="PTHR43591:SF24">
    <property type="entry name" value="2-METHOXY-6-POLYPRENYL-1,4-BENZOQUINOL METHYLASE, MITOCHONDRIAL"/>
    <property type="match status" value="1"/>
</dbReference>
<dbReference type="PANTHER" id="PTHR43591">
    <property type="entry name" value="METHYLTRANSFERASE"/>
    <property type="match status" value="1"/>
</dbReference>
<dbReference type="Pfam" id="PF01209">
    <property type="entry name" value="Ubie_methyltran"/>
    <property type="match status" value="1"/>
</dbReference>
<dbReference type="SUPFAM" id="SSF53335">
    <property type="entry name" value="S-adenosyl-L-methionine-dependent methyltransferases"/>
    <property type="match status" value="1"/>
</dbReference>
<dbReference type="PROSITE" id="PS51608">
    <property type="entry name" value="SAM_MT_UBIE"/>
    <property type="match status" value="1"/>
</dbReference>
<dbReference type="PROSITE" id="PS01183">
    <property type="entry name" value="UBIE_1"/>
    <property type="match status" value="1"/>
</dbReference>
<dbReference type="PROSITE" id="PS01184">
    <property type="entry name" value="UBIE_2"/>
    <property type="match status" value="1"/>
</dbReference>
<reference key="1">
    <citation type="journal article" date="2009" name="Appl. Environ. Microbiol.">
        <title>Genome analysis of the meat starter culture bacterium Staphylococcus carnosus TM300.</title>
        <authorList>
            <person name="Rosenstein R."/>
            <person name="Nerz C."/>
            <person name="Biswas L."/>
            <person name="Resch A."/>
            <person name="Raddatz G."/>
            <person name="Schuster S.C."/>
            <person name="Goetz F."/>
        </authorList>
    </citation>
    <scope>NUCLEOTIDE SEQUENCE [LARGE SCALE GENOMIC DNA]</scope>
    <source>
        <strain>TM300</strain>
    </source>
</reference>
<name>MENG_STACT</name>
<gene>
    <name evidence="1" type="primary">menG</name>
    <name type="ordered locus">Sca_1103</name>
</gene>
<evidence type="ECO:0000255" key="1">
    <source>
        <dbReference type="HAMAP-Rule" id="MF_01813"/>
    </source>
</evidence>
<organism>
    <name type="scientific">Staphylococcus carnosus (strain TM300)</name>
    <dbReference type="NCBI Taxonomy" id="396513"/>
    <lineage>
        <taxon>Bacteria</taxon>
        <taxon>Bacillati</taxon>
        <taxon>Bacillota</taxon>
        <taxon>Bacilli</taxon>
        <taxon>Bacillales</taxon>
        <taxon>Staphylococcaceae</taxon>
        <taxon>Staphylococcus</taxon>
    </lineage>
</organism>
<feature type="chain" id="PRO_1000187816" description="Demethylmenaquinone methyltransferase">
    <location>
        <begin position="1"/>
        <end position="241"/>
    </location>
</feature>
<feature type="binding site" evidence="1">
    <location>
        <position position="60"/>
    </location>
    <ligand>
        <name>S-adenosyl-L-methionine</name>
        <dbReference type="ChEBI" id="CHEBI:59789"/>
    </ligand>
</feature>
<feature type="binding site" evidence="1">
    <location>
        <position position="81"/>
    </location>
    <ligand>
        <name>S-adenosyl-L-methionine</name>
        <dbReference type="ChEBI" id="CHEBI:59789"/>
    </ligand>
</feature>
<feature type="binding site" evidence="1">
    <location>
        <begin position="106"/>
        <end position="107"/>
    </location>
    <ligand>
        <name>S-adenosyl-L-methionine</name>
        <dbReference type="ChEBI" id="CHEBI:59789"/>
    </ligand>
</feature>
<proteinExistence type="inferred from homology"/>
<protein>
    <recommendedName>
        <fullName evidence="1">Demethylmenaquinone methyltransferase</fullName>
        <ecNumber evidence="1">2.1.1.163</ecNumber>
    </recommendedName>
</protein>